<reference key="1">
    <citation type="journal article" date="2011" name="Genome Biol.">
        <title>Comparative and functional genomics provide insights into the pathogenicity of dermatophytic fungi.</title>
        <authorList>
            <person name="Burmester A."/>
            <person name="Shelest E."/>
            <person name="Gloeckner G."/>
            <person name="Heddergott C."/>
            <person name="Schindler S."/>
            <person name="Staib P."/>
            <person name="Heidel A."/>
            <person name="Felder M."/>
            <person name="Petzold A."/>
            <person name="Szafranski K."/>
            <person name="Feuermann M."/>
            <person name="Pedruzzi I."/>
            <person name="Priebe S."/>
            <person name="Groth M."/>
            <person name="Winkler R."/>
            <person name="Li W."/>
            <person name="Kniemeyer O."/>
            <person name="Schroeckh V."/>
            <person name="Hertweck C."/>
            <person name="Hube B."/>
            <person name="White T.C."/>
            <person name="Platzer M."/>
            <person name="Guthke R."/>
            <person name="Heitman J."/>
            <person name="Woestemeyer J."/>
            <person name="Zipfel P.F."/>
            <person name="Monod M."/>
            <person name="Brakhage A.A."/>
        </authorList>
    </citation>
    <scope>NUCLEOTIDE SEQUENCE [LARGE SCALE GENOMIC DNA]</scope>
    <source>
        <strain>HKI 0517</strain>
    </source>
</reference>
<reference key="2">
    <citation type="journal article" date="2012" name="Microbiology">
        <title>Genome mining reveals the presence of a conserved gene cluster for the biosynthesis of ergot alkaloid precursors in the fungal family Arthrodermataceae.</title>
        <authorList>
            <person name="Wallwey C."/>
            <person name="Heddergott C."/>
            <person name="Xie X."/>
            <person name="Brakhage A.A."/>
            <person name="Li S.M."/>
        </authorList>
    </citation>
    <scope>FUNCTION</scope>
</reference>
<accession>D4D445</accession>
<organism>
    <name type="scientific">Trichophyton verrucosum (strain HKI 0517)</name>
    <dbReference type="NCBI Taxonomy" id="663202"/>
    <lineage>
        <taxon>Eukaryota</taxon>
        <taxon>Fungi</taxon>
        <taxon>Dikarya</taxon>
        <taxon>Ascomycota</taxon>
        <taxon>Pezizomycotina</taxon>
        <taxon>Eurotiomycetes</taxon>
        <taxon>Eurotiomycetidae</taxon>
        <taxon>Onygenales</taxon>
        <taxon>Arthrodermataceae</taxon>
        <taxon>Trichophyton</taxon>
    </lineage>
</organism>
<feature type="chain" id="PRO_0000439125" description="Catalase easC">
    <location>
        <begin position="1"/>
        <end position="478"/>
    </location>
</feature>
<feature type="region of interest" description="Disordered" evidence="2">
    <location>
        <begin position="459"/>
        <end position="478"/>
    </location>
</feature>
<feature type="active site" evidence="1">
    <location>
        <position position="54"/>
    </location>
</feature>
<feature type="binding site" description="axial binding residue" evidence="1">
    <location>
        <position position="343"/>
    </location>
    <ligand>
        <name>heme</name>
        <dbReference type="ChEBI" id="CHEBI:30413"/>
    </ligand>
    <ligandPart>
        <name>Fe</name>
        <dbReference type="ChEBI" id="CHEBI:18248"/>
    </ligandPart>
</feature>
<evidence type="ECO:0000250" key="1">
    <source>
        <dbReference type="UniProtKB" id="P15202"/>
    </source>
</evidence>
<evidence type="ECO:0000256" key="2">
    <source>
        <dbReference type="SAM" id="MobiDB-lite"/>
    </source>
</evidence>
<evidence type="ECO:0000269" key="3">
    <source>
    </source>
</evidence>
<evidence type="ECO:0000303" key="4">
    <source>
    </source>
</evidence>
<evidence type="ECO:0000305" key="5"/>
<evidence type="ECO:0000305" key="6">
    <source>
    </source>
</evidence>
<protein>
    <recommendedName>
        <fullName evidence="4">Catalase easC</fullName>
        <ecNumber evidence="6">1.11.-.-</ecNumber>
    </recommendedName>
    <alternativeName>
        <fullName evidence="4">Ergot alkaloid synthesis protein C</fullName>
    </alternativeName>
</protein>
<sequence length="478" mass="54314">MAPNAADKCPVMGNSGEKCPVMSSSTQSRGPRDIYTLEALSHFNREKIPERAVHAKGTGAYGEFEVTADISDICNIDMLLGVGKKTQCVTRFSTTGLERGSSDGVRDLKGMAVKFFTEQGDWDWVSLNFPFFFIRDPAKFPDMIHSQRRDPQTNLLNPNMTWDFVTKNPEALHMTLLQHSDFGTMFTWRTLSSYVGHAFKWVMPDGSFKYVHFFLASDRGPNFTDGSTAKVDPNDPDFATKDLFEAIERGDYPSWTANVQVVDPKDAPKLGFNILDLTKHWNLGTYPKGLDTIPSRPFGKLTLNRNVKDYFSEVEKLAFSPSNLVPGVEPSEDPILQARMFAYPDAQRYRLGIDHLKAPLRRKETACQHDLGPEFEKWLSQVTSEAWSHPHEDDYKFAREYYEVLPEFRSQEFQDRMVENLCKSIAPGPEELRKRVYDTFELVSSELARRLREGAEAIVAEKARPDSPSRAQPGQLRL</sequence>
<comment type="function">
    <text evidence="3">Catalase; part of the gene cluster that mediates the biosynthesis of fungal ergot alkaloid (PubMed:22403186). DmaW catalyzes the first step of ergot alkaloid biosynthesis by condensing dimethylallyl diphosphate (DMAP) and tryptophan to form 4-dimethylallyl-L-tryptophan (PubMed:22403186). The second step is catalyzed by the methyltransferase easF that methylates 4-dimethylallyl-L-tryptophan in the presence of S-adenosyl-L-methionine, resulting in the formation of 4-dimethylallyl-L-abrine (PubMed:22403186). The catalase easC and the FAD-dependent oxidoreductase easE then transform 4-dimethylallyl-L-abrine to chanoclavine-I which is further oxidized by easD in the presence of NAD(+), resulting in the formation of chanoclavine-I aldehyde (PubMed:22403186). Chanoclavine-I aldehyde is the precursor of ergoamides and ergopeptines in Clavicipitaceae, and clavine-type alcaloids such as fumiclavine in Trichocomaceae (PubMed:22403186). However, the metabolites downstream of chanoclavine-I aldehyde in Arthrodermataceae have not been identified yet (PubMed:22403186).</text>
</comment>
<comment type="cofactor">
    <cofactor evidence="1">
        <name>heme</name>
        <dbReference type="ChEBI" id="CHEBI:30413"/>
    </cofactor>
</comment>
<comment type="pathway">
    <text evidence="6">Alkaloid biosynthesis; ergot alkaloid biosynthesis.</text>
</comment>
<comment type="similarity">
    <text evidence="5">Belongs to the catalase family.</text>
</comment>
<gene>
    <name evidence="4" type="primary">easC</name>
    <name type="ORF">TRV_01859</name>
</gene>
<keyword id="KW-0017">Alkaloid metabolism</keyword>
<keyword id="KW-0349">Heme</keyword>
<keyword id="KW-0376">Hydrogen peroxide</keyword>
<keyword id="KW-0408">Iron</keyword>
<keyword id="KW-0479">Metal-binding</keyword>
<keyword id="KW-0560">Oxidoreductase</keyword>
<keyword id="KW-0575">Peroxidase</keyword>
<name>EASC_TRIVH</name>
<proteinExistence type="inferred from homology"/>
<dbReference type="EC" id="1.11.-.-" evidence="6"/>
<dbReference type="EMBL" id="ACYE01000098">
    <property type="protein sequence ID" value="EFE43379.1"/>
    <property type="molecule type" value="Genomic_DNA"/>
</dbReference>
<dbReference type="RefSeq" id="XP_003023997.1">
    <property type="nucleotide sequence ID" value="XM_003023951.1"/>
</dbReference>
<dbReference type="SMR" id="D4D445"/>
<dbReference type="GeneID" id="9582690"/>
<dbReference type="KEGG" id="tve:TRV_01859"/>
<dbReference type="HOGENOM" id="CLU_010645_2_0_1"/>
<dbReference type="OrthoDB" id="230at34384"/>
<dbReference type="UniPathway" id="UPA00327"/>
<dbReference type="Proteomes" id="UP000008383">
    <property type="component" value="Unassembled WGS sequence"/>
</dbReference>
<dbReference type="GO" id="GO:0005739">
    <property type="term" value="C:mitochondrion"/>
    <property type="evidence" value="ECO:0007669"/>
    <property type="project" value="TreeGrafter"/>
</dbReference>
<dbReference type="GO" id="GO:0005777">
    <property type="term" value="C:peroxisome"/>
    <property type="evidence" value="ECO:0007669"/>
    <property type="project" value="TreeGrafter"/>
</dbReference>
<dbReference type="GO" id="GO:0004096">
    <property type="term" value="F:catalase activity"/>
    <property type="evidence" value="ECO:0007669"/>
    <property type="project" value="InterPro"/>
</dbReference>
<dbReference type="GO" id="GO:0020037">
    <property type="term" value="F:heme binding"/>
    <property type="evidence" value="ECO:0007669"/>
    <property type="project" value="InterPro"/>
</dbReference>
<dbReference type="GO" id="GO:0046872">
    <property type="term" value="F:metal ion binding"/>
    <property type="evidence" value="ECO:0007669"/>
    <property type="project" value="UniProtKB-KW"/>
</dbReference>
<dbReference type="GO" id="GO:0042744">
    <property type="term" value="P:hydrogen peroxide catabolic process"/>
    <property type="evidence" value="ECO:0007669"/>
    <property type="project" value="UniProtKB-KW"/>
</dbReference>
<dbReference type="GO" id="GO:0035835">
    <property type="term" value="P:indole alkaloid biosynthetic process"/>
    <property type="evidence" value="ECO:0007669"/>
    <property type="project" value="UniProtKB-UniPathway"/>
</dbReference>
<dbReference type="GO" id="GO:0042542">
    <property type="term" value="P:response to hydrogen peroxide"/>
    <property type="evidence" value="ECO:0007669"/>
    <property type="project" value="TreeGrafter"/>
</dbReference>
<dbReference type="Gene3D" id="2.40.180.10">
    <property type="entry name" value="Catalase core domain"/>
    <property type="match status" value="1"/>
</dbReference>
<dbReference type="InterPro" id="IPR018028">
    <property type="entry name" value="Catalase"/>
</dbReference>
<dbReference type="InterPro" id="IPR024708">
    <property type="entry name" value="Catalase_AS"/>
</dbReference>
<dbReference type="InterPro" id="IPR024711">
    <property type="entry name" value="Catalase_clade1/3"/>
</dbReference>
<dbReference type="InterPro" id="IPR011614">
    <property type="entry name" value="Catalase_core"/>
</dbReference>
<dbReference type="InterPro" id="IPR002226">
    <property type="entry name" value="Catalase_haem_BS"/>
</dbReference>
<dbReference type="InterPro" id="IPR020835">
    <property type="entry name" value="Catalase_sf"/>
</dbReference>
<dbReference type="PANTHER" id="PTHR11465">
    <property type="entry name" value="CATALASE"/>
    <property type="match status" value="1"/>
</dbReference>
<dbReference type="PANTHER" id="PTHR11465:SF9">
    <property type="entry name" value="CATALASE"/>
    <property type="match status" value="1"/>
</dbReference>
<dbReference type="Pfam" id="PF00199">
    <property type="entry name" value="Catalase"/>
    <property type="match status" value="1"/>
</dbReference>
<dbReference type="PIRSF" id="PIRSF038928">
    <property type="entry name" value="Catalase_clade1-3"/>
    <property type="match status" value="1"/>
</dbReference>
<dbReference type="PRINTS" id="PR00067">
    <property type="entry name" value="CATALASE"/>
</dbReference>
<dbReference type="SMART" id="SM01060">
    <property type="entry name" value="Catalase"/>
    <property type="match status" value="1"/>
</dbReference>
<dbReference type="SUPFAM" id="SSF56634">
    <property type="entry name" value="Heme-dependent catalase-like"/>
    <property type="match status" value="1"/>
</dbReference>
<dbReference type="PROSITE" id="PS00437">
    <property type="entry name" value="CATALASE_1"/>
    <property type="match status" value="1"/>
</dbReference>
<dbReference type="PROSITE" id="PS00438">
    <property type="entry name" value="CATALASE_2"/>
    <property type="match status" value="1"/>
</dbReference>
<dbReference type="PROSITE" id="PS51402">
    <property type="entry name" value="CATALASE_3"/>
    <property type="match status" value="1"/>
</dbReference>